<organism>
    <name type="scientific">Agrobacterium fabrum (strain C58 / ATCC 33970)</name>
    <name type="common">Agrobacterium tumefaciens (strain C58)</name>
    <dbReference type="NCBI Taxonomy" id="176299"/>
    <lineage>
        <taxon>Bacteria</taxon>
        <taxon>Pseudomonadati</taxon>
        <taxon>Pseudomonadota</taxon>
        <taxon>Alphaproteobacteria</taxon>
        <taxon>Hyphomicrobiales</taxon>
        <taxon>Rhizobiaceae</taxon>
        <taxon>Rhizobium/Agrobacterium group</taxon>
        <taxon>Agrobacterium</taxon>
        <taxon>Agrobacterium tumefaciens complex</taxon>
    </lineage>
</organism>
<feature type="chain" id="PRO_0000063978" description="Aquaporin Z 1">
    <location>
        <begin position="1"/>
        <end position="241"/>
    </location>
</feature>
<feature type="transmembrane region" description="Helical" evidence="1">
    <location>
        <begin position="23"/>
        <end position="43"/>
    </location>
</feature>
<feature type="transmembrane region" description="Helical" evidence="1">
    <location>
        <begin position="85"/>
        <end position="105"/>
    </location>
</feature>
<feature type="transmembrane region" description="Helical" evidence="1">
    <location>
        <begin position="129"/>
        <end position="149"/>
    </location>
</feature>
<feature type="transmembrane region" description="Helical" evidence="1">
    <location>
        <begin position="156"/>
        <end position="176"/>
    </location>
</feature>
<feature type="transmembrane region" description="Helical" evidence="1">
    <location>
        <begin position="204"/>
        <end position="224"/>
    </location>
</feature>
<feature type="short sequence motif" description="NPA 1" evidence="1">
    <location>
        <begin position="63"/>
        <end position="65"/>
    </location>
</feature>
<feature type="short sequence motif" description="NPA 2" evidence="1">
    <location>
        <begin position="184"/>
        <end position="186"/>
    </location>
</feature>
<feature type="site" description="Involved in tetramerization or stability of the tetramer" evidence="1">
    <location>
        <position position="20"/>
    </location>
</feature>
<feature type="site" description="Selectivity filter" evidence="1">
    <location>
        <position position="43"/>
    </location>
</feature>
<feature type="site" description="Selectivity filter" evidence="1">
    <location>
        <position position="172"/>
    </location>
</feature>
<feature type="site" description="Selectivity filter" evidence="1">
    <location>
        <position position="181"/>
    </location>
</feature>
<feature type="site" description="Selectivity filter" evidence="1">
    <location>
        <position position="187"/>
    </location>
</feature>
<evidence type="ECO:0000255" key="1">
    <source>
        <dbReference type="HAMAP-Rule" id="MF_01146"/>
    </source>
</evidence>
<evidence type="ECO:0000305" key="2"/>
<proteinExistence type="inferred from homology"/>
<dbReference type="EMBL" id="AE007869">
    <property type="protein sequence ID" value="AAK86288.1"/>
    <property type="molecule type" value="Genomic_DNA"/>
</dbReference>
<dbReference type="PIR" id="AI2634">
    <property type="entry name" value="AI2634"/>
</dbReference>
<dbReference type="PIR" id="G97416">
    <property type="entry name" value="G97416"/>
</dbReference>
<dbReference type="RefSeq" id="NP_353503.1">
    <property type="nucleotide sequence ID" value="NC_003062.2"/>
</dbReference>
<dbReference type="RefSeq" id="WP_006313332.1">
    <property type="nucleotide sequence ID" value="NC_003062.2"/>
</dbReference>
<dbReference type="SMR" id="Q8UI24"/>
<dbReference type="STRING" id="176299.Atu0476"/>
<dbReference type="EnsemblBacteria" id="AAK86288">
    <property type="protein sequence ID" value="AAK86288"/>
    <property type="gene ID" value="Atu0476"/>
</dbReference>
<dbReference type="GeneID" id="1132514"/>
<dbReference type="KEGG" id="atu:Atu0476"/>
<dbReference type="PATRIC" id="fig|176299.10.peg.475"/>
<dbReference type="eggNOG" id="COG0580">
    <property type="taxonomic scope" value="Bacteria"/>
</dbReference>
<dbReference type="HOGENOM" id="CLU_020019_3_2_5"/>
<dbReference type="OrthoDB" id="9807293at2"/>
<dbReference type="PhylomeDB" id="Q8UI24"/>
<dbReference type="BioCyc" id="AGRO:ATU0476-MONOMER"/>
<dbReference type="Proteomes" id="UP000000813">
    <property type="component" value="Chromosome circular"/>
</dbReference>
<dbReference type="GO" id="GO:0005886">
    <property type="term" value="C:plasma membrane"/>
    <property type="evidence" value="ECO:0007669"/>
    <property type="project" value="UniProtKB-SubCell"/>
</dbReference>
<dbReference type="GO" id="GO:0015250">
    <property type="term" value="F:water channel activity"/>
    <property type="evidence" value="ECO:0007669"/>
    <property type="project" value="UniProtKB-UniRule"/>
</dbReference>
<dbReference type="FunFam" id="1.20.1080.10:FF:000007">
    <property type="entry name" value="Aquaporin Z"/>
    <property type="match status" value="1"/>
</dbReference>
<dbReference type="Gene3D" id="1.20.1080.10">
    <property type="entry name" value="Glycerol uptake facilitator protein"/>
    <property type="match status" value="1"/>
</dbReference>
<dbReference type="HAMAP" id="MF_01146">
    <property type="entry name" value="Aquaporin_Z"/>
    <property type="match status" value="1"/>
</dbReference>
<dbReference type="InterPro" id="IPR023271">
    <property type="entry name" value="Aquaporin-like"/>
</dbReference>
<dbReference type="InterPro" id="IPR034294">
    <property type="entry name" value="Aquaporin_transptr"/>
</dbReference>
<dbReference type="InterPro" id="IPR023743">
    <property type="entry name" value="Aquaporin_Z"/>
</dbReference>
<dbReference type="InterPro" id="IPR000425">
    <property type="entry name" value="MIP"/>
</dbReference>
<dbReference type="InterPro" id="IPR022357">
    <property type="entry name" value="MIP_CS"/>
</dbReference>
<dbReference type="NCBIfam" id="TIGR00861">
    <property type="entry name" value="MIP"/>
    <property type="match status" value="1"/>
</dbReference>
<dbReference type="NCBIfam" id="NF003838">
    <property type="entry name" value="PRK05420.1"/>
    <property type="match status" value="1"/>
</dbReference>
<dbReference type="PANTHER" id="PTHR19139">
    <property type="entry name" value="AQUAPORIN TRANSPORTER"/>
    <property type="match status" value="1"/>
</dbReference>
<dbReference type="PANTHER" id="PTHR19139:SF199">
    <property type="entry name" value="MIP17260P"/>
    <property type="match status" value="1"/>
</dbReference>
<dbReference type="Pfam" id="PF00230">
    <property type="entry name" value="MIP"/>
    <property type="match status" value="1"/>
</dbReference>
<dbReference type="PRINTS" id="PR00783">
    <property type="entry name" value="MINTRINSICP"/>
</dbReference>
<dbReference type="SUPFAM" id="SSF81338">
    <property type="entry name" value="Aquaporin-like"/>
    <property type="match status" value="1"/>
</dbReference>
<dbReference type="PROSITE" id="PS00221">
    <property type="entry name" value="MIP"/>
    <property type="match status" value="1"/>
</dbReference>
<gene>
    <name evidence="1" type="primary">aqpZ1</name>
    <name type="ordered locus">Atu0476</name>
    <name type="ORF">AGR_C_841</name>
</gene>
<name>AQPZ1_AGRFC</name>
<keyword id="KW-0997">Cell inner membrane</keyword>
<keyword id="KW-1003">Cell membrane</keyword>
<keyword id="KW-0472">Membrane</keyword>
<keyword id="KW-1185">Reference proteome</keyword>
<keyword id="KW-0677">Repeat</keyword>
<keyword id="KW-0812">Transmembrane</keyword>
<keyword id="KW-1133">Transmembrane helix</keyword>
<keyword id="KW-0813">Transport</keyword>
<protein>
    <recommendedName>
        <fullName evidence="1">Aquaporin Z 1</fullName>
    </recommendedName>
</protein>
<sequence length="241" mass="24544">MSRKFISEFLGTFWLVFGGCGSAVFAAAFPELGIGFLGVAFAFGLTVLTMAYAVGGISGGHFNPAVSVGLTVAGKFPAANLVPYIVAQVLGAVVAAAALYVILTGKAGAEIGGFAANGYGEHSPGGYSLLSALLIEIILTAFFLVVILGSTHGRVPVGFAPVAIGLALTLIHLISIPVTNTSVNPARSTGQALFVGGWALQQLWLFWLAPILGGAIGAVVWKIFGEEEKAGHAGSVQPAKT</sequence>
<comment type="function">
    <text evidence="1">Channel that permits osmotically driven movement of water in both directions. It is involved in the osmoregulation and in the maintenance of cell turgor during volume expansion in rapidly growing cells. It mediates rapid entry or exit of water in response to abrupt changes in osmolarity.</text>
</comment>
<comment type="catalytic activity">
    <reaction evidence="1">
        <text>H2O(in) = H2O(out)</text>
        <dbReference type="Rhea" id="RHEA:29667"/>
        <dbReference type="ChEBI" id="CHEBI:15377"/>
    </reaction>
    <physiologicalReaction direction="left-to-right" evidence="1">
        <dbReference type="Rhea" id="RHEA:29668"/>
    </physiologicalReaction>
    <physiologicalReaction direction="right-to-left" evidence="1">
        <dbReference type="Rhea" id="RHEA:29669"/>
    </physiologicalReaction>
</comment>
<comment type="subunit">
    <text evidence="1">Homotetramer.</text>
</comment>
<comment type="subcellular location">
    <subcellularLocation>
        <location evidence="1">Cell inner membrane</location>
        <topology evidence="1">Multi-pass membrane protein</topology>
    </subcellularLocation>
</comment>
<comment type="domain">
    <text evidence="1">Aquaporins contain two tandem repeats each containing three membrane-spanning domains and a pore-forming loop with the signature motif Asn-Pro-Ala (NPA).</text>
</comment>
<comment type="similarity">
    <text evidence="1 2">Belongs to the MIP/aquaporin (TC 1.A.8) family.</text>
</comment>
<accession>Q8UI24</accession>
<reference key="1">
    <citation type="journal article" date="2001" name="Science">
        <title>The genome of the natural genetic engineer Agrobacterium tumefaciens C58.</title>
        <authorList>
            <person name="Wood D.W."/>
            <person name="Setubal J.C."/>
            <person name="Kaul R."/>
            <person name="Monks D.E."/>
            <person name="Kitajima J.P."/>
            <person name="Okura V.K."/>
            <person name="Zhou Y."/>
            <person name="Chen L."/>
            <person name="Wood G.E."/>
            <person name="Almeida N.F. Jr."/>
            <person name="Woo L."/>
            <person name="Chen Y."/>
            <person name="Paulsen I.T."/>
            <person name="Eisen J.A."/>
            <person name="Karp P.D."/>
            <person name="Bovee D. Sr."/>
            <person name="Chapman P."/>
            <person name="Clendenning J."/>
            <person name="Deatherage G."/>
            <person name="Gillet W."/>
            <person name="Grant C."/>
            <person name="Kutyavin T."/>
            <person name="Levy R."/>
            <person name="Li M.-J."/>
            <person name="McClelland E."/>
            <person name="Palmieri A."/>
            <person name="Raymond C."/>
            <person name="Rouse G."/>
            <person name="Saenphimmachak C."/>
            <person name="Wu Z."/>
            <person name="Romero P."/>
            <person name="Gordon D."/>
            <person name="Zhang S."/>
            <person name="Yoo H."/>
            <person name="Tao Y."/>
            <person name="Biddle P."/>
            <person name="Jung M."/>
            <person name="Krespan W."/>
            <person name="Perry M."/>
            <person name="Gordon-Kamm B."/>
            <person name="Liao L."/>
            <person name="Kim S."/>
            <person name="Hendrick C."/>
            <person name="Zhao Z.-Y."/>
            <person name="Dolan M."/>
            <person name="Chumley F."/>
            <person name="Tingey S.V."/>
            <person name="Tomb J.-F."/>
            <person name="Gordon M.P."/>
            <person name="Olson M.V."/>
            <person name="Nester E.W."/>
        </authorList>
    </citation>
    <scope>NUCLEOTIDE SEQUENCE [LARGE SCALE GENOMIC DNA]</scope>
    <source>
        <strain>C58 / ATCC 33970</strain>
    </source>
</reference>
<reference key="2">
    <citation type="journal article" date="2001" name="Science">
        <title>Genome sequence of the plant pathogen and biotechnology agent Agrobacterium tumefaciens C58.</title>
        <authorList>
            <person name="Goodner B."/>
            <person name="Hinkle G."/>
            <person name="Gattung S."/>
            <person name="Miller N."/>
            <person name="Blanchard M."/>
            <person name="Qurollo B."/>
            <person name="Goldman B.S."/>
            <person name="Cao Y."/>
            <person name="Askenazi M."/>
            <person name="Halling C."/>
            <person name="Mullin L."/>
            <person name="Houmiel K."/>
            <person name="Gordon J."/>
            <person name="Vaudin M."/>
            <person name="Iartchouk O."/>
            <person name="Epp A."/>
            <person name="Liu F."/>
            <person name="Wollam C."/>
            <person name="Allinger M."/>
            <person name="Doughty D."/>
            <person name="Scott C."/>
            <person name="Lappas C."/>
            <person name="Markelz B."/>
            <person name="Flanagan C."/>
            <person name="Crowell C."/>
            <person name="Gurson J."/>
            <person name="Lomo C."/>
            <person name="Sear C."/>
            <person name="Strub G."/>
            <person name="Cielo C."/>
            <person name="Slater S."/>
        </authorList>
    </citation>
    <scope>NUCLEOTIDE SEQUENCE [LARGE SCALE GENOMIC DNA]</scope>
    <source>
        <strain>C58 / ATCC 33970</strain>
    </source>
</reference>